<dbReference type="EMBL" id="CP000682">
    <property type="protein sequence ID" value="ABP94754.1"/>
    <property type="molecule type" value="Genomic_DNA"/>
</dbReference>
<dbReference type="SMR" id="A4YEA2"/>
<dbReference type="STRING" id="399549.Msed_0579"/>
<dbReference type="KEGG" id="mse:Msed_0579"/>
<dbReference type="eggNOG" id="arCOG05888">
    <property type="taxonomic scope" value="Archaea"/>
</dbReference>
<dbReference type="HOGENOM" id="CLU_2929990_0_0_2"/>
<dbReference type="Proteomes" id="UP000000242">
    <property type="component" value="Chromosome"/>
</dbReference>
<dbReference type="GO" id="GO:0005737">
    <property type="term" value="C:cytoplasm"/>
    <property type="evidence" value="ECO:0007669"/>
    <property type="project" value="UniProtKB-SubCell"/>
</dbReference>
<dbReference type="GO" id="GO:0003677">
    <property type="term" value="F:DNA binding"/>
    <property type="evidence" value="ECO:0007669"/>
    <property type="project" value="UniProtKB-KW"/>
</dbReference>
<dbReference type="GO" id="GO:0004521">
    <property type="term" value="F:RNA endonuclease activity"/>
    <property type="evidence" value="ECO:0007669"/>
    <property type="project" value="InterPro"/>
</dbReference>
<dbReference type="Gene3D" id="2.40.50.40">
    <property type="match status" value="1"/>
</dbReference>
<dbReference type="InterPro" id="IPR016197">
    <property type="entry name" value="Chromo-like_dom_sf"/>
</dbReference>
<dbReference type="InterPro" id="IPR003212">
    <property type="entry name" value="DNA-bd_7a-e_arc"/>
</dbReference>
<dbReference type="NCBIfam" id="NF045555">
    <property type="entry name" value="Sul7d"/>
    <property type="match status" value="1"/>
</dbReference>
<dbReference type="Pfam" id="PF02294">
    <property type="entry name" value="7kD_DNA_binding"/>
    <property type="match status" value="1"/>
</dbReference>
<dbReference type="SUPFAM" id="SSF54160">
    <property type="entry name" value="Chromo domain-like"/>
    <property type="match status" value="1"/>
</dbReference>
<evidence type="ECO:0000250" key="1">
    <source>
        <dbReference type="UniProtKB" id="P61990"/>
    </source>
</evidence>
<evidence type="ECO:0000269" key="2">
    <source>
    </source>
</evidence>
<evidence type="ECO:0000303" key="3">
    <source>
    </source>
</evidence>
<evidence type="ECO:0000305" key="4"/>
<evidence type="ECO:0000312" key="5">
    <source>
        <dbReference type="EMBL" id="ABP94754.1"/>
    </source>
</evidence>
<keyword id="KW-0963">Cytoplasm</keyword>
<keyword id="KW-0238">DNA-binding</keyword>
<keyword id="KW-1185">Reference proteome</keyword>
<feature type="chain" id="PRO_0000439049" description="DNA-binding protein 7">
    <location>
        <begin position="1"/>
        <end position="62"/>
    </location>
</feature>
<proteinExistence type="evidence at protein level"/>
<gene>
    <name evidence="5" type="ordered locus">Msed_0579</name>
</gene>
<organism>
    <name type="scientific">Metallosphaera sedula (strain ATCC 51363 / DSM 5348 / JCM 9185 / NBRC 15509 / TH2)</name>
    <dbReference type="NCBI Taxonomy" id="399549"/>
    <lineage>
        <taxon>Archaea</taxon>
        <taxon>Thermoproteota</taxon>
        <taxon>Thermoprotei</taxon>
        <taxon>Sulfolobales</taxon>
        <taxon>Sulfolobaceae</taxon>
        <taxon>Metallosphaera</taxon>
    </lineage>
</organism>
<reference key="1">
    <citation type="journal article" date="2008" name="Appl. Environ. Microbiol.">
        <title>The genome sequence of the metal-mobilizing, extremely thermoacidophilic archaeon Metallosphaera sedula provides insights into bioleaching-associated metabolism.</title>
        <authorList>
            <person name="Auernik K.S."/>
            <person name="Maezato Y."/>
            <person name="Blum P.H."/>
            <person name="Kelly R.M."/>
        </authorList>
    </citation>
    <scope>NUCLEOTIDE SEQUENCE [LARGE SCALE GENOMIC DNA]</scope>
    <source>
        <strain>ATCC 51363 / DSM 5348 / JCM 9185 / NBRC 15509 / TH2</strain>
    </source>
</reference>
<reference key="2">
    <citation type="journal article" date="2016" name="Sci. Rep.">
        <title>The archaeal '7 kDa DNA-binding' proteins: extended characterization of an old gifted family.</title>
        <authorList>
            <person name="Kalichuk V."/>
            <person name="Behar G."/>
            <person name="Renodon-Corniere A."/>
            <person name="Danovski G."/>
            <person name="Obal G."/>
            <person name="Barbet J."/>
            <person name="Mouratou B."/>
            <person name="Pecorari F."/>
        </authorList>
    </citation>
    <scope>DNA-BINDING</scope>
    <scope>BIOPHYSICOCHEMICAL PROPERTIES</scope>
    <scope>SUBUNIT</scope>
    <scope>SUBCELLULAR LOCATION</scope>
    <scope>NOMENCLATURE</scope>
</reference>
<name>DN7_METS5</name>
<protein>
    <recommendedName>
        <fullName evidence="4">DNA-binding protein 7</fullName>
    </recommendedName>
    <alternativeName>
        <fullName evidence="4">7 kDa DNA-binding protein</fullName>
    </alternativeName>
    <alternativeName>
        <fullName evidence="3">Mse7</fullName>
    </alternativeName>
</protein>
<comment type="function">
    <text evidence="1">Can constrain negative DNA supercoils. May be involved in maintaining the integrity of the genome at high temperature.</text>
</comment>
<comment type="biophysicochemical properties">
    <phDependence>
        <text evidence="2">Highly stable from pH 0 to pH 12.</text>
    </phDependence>
    <temperatureDependence>
        <text evidence="2">Hyperthermostable.</text>
    </temperatureDependence>
</comment>
<comment type="subunit">
    <text evidence="2">Monomer.</text>
</comment>
<comment type="subcellular location">
    <subcellularLocation>
        <location evidence="2">Cytoplasm</location>
    </subcellularLocation>
</comment>
<comment type="similarity">
    <text evidence="4">Belongs to the 7 kDa DNA-binding/endoribonuclease P2 family.</text>
</comment>
<accession>A4YEA2</accession>
<sequence>MATKIKFKYKGQDLEVDISKVKKVWKVGKMVSFTYDDNGKTGRGAVSEKDAPKELLNMIGKK</sequence>